<sequence>MAVSGSHRPLTGPQAESWTAEYLTARGLRLIERNYRCRLGEIDLVMAEGATLVFVEVRYRSGKRYGGALASVDRHKCRRLLATAQHYMVEHRVTGAVRLDVVAVSPGAAGPQAEWIRNAIEAQ</sequence>
<dbReference type="EMBL" id="AE017282">
    <property type="protein sequence ID" value="AAU90540.1"/>
    <property type="molecule type" value="Genomic_DNA"/>
</dbReference>
<dbReference type="RefSeq" id="WP_010959552.1">
    <property type="nucleotide sequence ID" value="NC_002977.6"/>
</dbReference>
<dbReference type="SMR" id="Q60CC4"/>
<dbReference type="STRING" id="243233.MCA0184"/>
<dbReference type="GeneID" id="88222532"/>
<dbReference type="KEGG" id="mca:MCA0184"/>
<dbReference type="eggNOG" id="COG0792">
    <property type="taxonomic scope" value="Bacteria"/>
</dbReference>
<dbReference type="HOGENOM" id="CLU_115353_1_0_6"/>
<dbReference type="Proteomes" id="UP000006821">
    <property type="component" value="Chromosome"/>
</dbReference>
<dbReference type="GO" id="GO:0003676">
    <property type="term" value="F:nucleic acid binding"/>
    <property type="evidence" value="ECO:0007669"/>
    <property type="project" value="InterPro"/>
</dbReference>
<dbReference type="CDD" id="cd20736">
    <property type="entry name" value="PoNe_Nuclease"/>
    <property type="match status" value="1"/>
</dbReference>
<dbReference type="Gene3D" id="3.40.1350.10">
    <property type="match status" value="1"/>
</dbReference>
<dbReference type="HAMAP" id="MF_00048">
    <property type="entry name" value="UPF0102"/>
    <property type="match status" value="1"/>
</dbReference>
<dbReference type="InterPro" id="IPR011335">
    <property type="entry name" value="Restrct_endonuc-II-like"/>
</dbReference>
<dbReference type="InterPro" id="IPR011856">
    <property type="entry name" value="tRNA_endonuc-like_dom_sf"/>
</dbReference>
<dbReference type="InterPro" id="IPR003509">
    <property type="entry name" value="UPF0102_YraN-like"/>
</dbReference>
<dbReference type="NCBIfam" id="NF009150">
    <property type="entry name" value="PRK12497.1-3"/>
    <property type="match status" value="1"/>
</dbReference>
<dbReference type="NCBIfam" id="TIGR00252">
    <property type="entry name" value="YraN family protein"/>
    <property type="match status" value="1"/>
</dbReference>
<dbReference type="PANTHER" id="PTHR34039">
    <property type="entry name" value="UPF0102 PROTEIN YRAN"/>
    <property type="match status" value="1"/>
</dbReference>
<dbReference type="PANTHER" id="PTHR34039:SF1">
    <property type="entry name" value="UPF0102 PROTEIN YRAN"/>
    <property type="match status" value="1"/>
</dbReference>
<dbReference type="Pfam" id="PF02021">
    <property type="entry name" value="UPF0102"/>
    <property type="match status" value="1"/>
</dbReference>
<dbReference type="SUPFAM" id="SSF52980">
    <property type="entry name" value="Restriction endonuclease-like"/>
    <property type="match status" value="1"/>
</dbReference>
<organism>
    <name type="scientific">Methylococcus capsulatus (strain ATCC 33009 / NCIMB 11132 / Bath)</name>
    <dbReference type="NCBI Taxonomy" id="243233"/>
    <lineage>
        <taxon>Bacteria</taxon>
        <taxon>Pseudomonadati</taxon>
        <taxon>Pseudomonadota</taxon>
        <taxon>Gammaproteobacteria</taxon>
        <taxon>Methylococcales</taxon>
        <taxon>Methylococcaceae</taxon>
        <taxon>Methylococcus</taxon>
    </lineage>
</organism>
<accession>Q60CC4</accession>
<evidence type="ECO:0000255" key="1">
    <source>
        <dbReference type="HAMAP-Rule" id="MF_00048"/>
    </source>
</evidence>
<comment type="similarity">
    <text evidence="1">Belongs to the UPF0102 family.</text>
</comment>
<name>Y184_METCA</name>
<proteinExistence type="inferred from homology"/>
<protein>
    <recommendedName>
        <fullName evidence="1">UPF0102 protein MCA0184</fullName>
    </recommendedName>
</protein>
<feature type="chain" id="PRO_0000336203" description="UPF0102 protein MCA0184">
    <location>
        <begin position="1"/>
        <end position="123"/>
    </location>
</feature>
<reference key="1">
    <citation type="journal article" date="2004" name="PLoS Biol.">
        <title>Genomic insights into methanotrophy: the complete genome sequence of Methylococcus capsulatus (Bath).</title>
        <authorList>
            <person name="Ward N.L."/>
            <person name="Larsen O."/>
            <person name="Sakwa J."/>
            <person name="Bruseth L."/>
            <person name="Khouri H.M."/>
            <person name="Durkin A.S."/>
            <person name="Dimitrov G."/>
            <person name="Jiang L."/>
            <person name="Scanlan D."/>
            <person name="Kang K.H."/>
            <person name="Lewis M.R."/>
            <person name="Nelson K.E."/>
            <person name="Methe B.A."/>
            <person name="Wu M."/>
            <person name="Heidelberg J.F."/>
            <person name="Paulsen I.T."/>
            <person name="Fouts D.E."/>
            <person name="Ravel J."/>
            <person name="Tettelin H."/>
            <person name="Ren Q."/>
            <person name="Read T.D."/>
            <person name="DeBoy R.T."/>
            <person name="Seshadri R."/>
            <person name="Salzberg S.L."/>
            <person name="Jensen H.B."/>
            <person name="Birkeland N.K."/>
            <person name="Nelson W.C."/>
            <person name="Dodson R.J."/>
            <person name="Grindhaug S.H."/>
            <person name="Holt I.E."/>
            <person name="Eidhammer I."/>
            <person name="Jonasen I."/>
            <person name="Vanaken S."/>
            <person name="Utterback T.R."/>
            <person name="Feldblyum T.V."/>
            <person name="Fraser C.M."/>
            <person name="Lillehaug J.R."/>
            <person name="Eisen J.A."/>
        </authorList>
    </citation>
    <scope>NUCLEOTIDE SEQUENCE [LARGE SCALE GENOMIC DNA]</scope>
    <source>
        <strain>ATCC 33009 / NCIMB 11132 / Bath</strain>
    </source>
</reference>
<gene>
    <name type="ordered locus">MCA0184</name>
</gene>
<keyword id="KW-1185">Reference proteome</keyword>